<dbReference type="EC" id="3.6.1.15" evidence="1"/>
<dbReference type="EMBL" id="BA000023">
    <property type="protein sequence ID" value="BAK54747.1"/>
    <property type="molecule type" value="Genomic_DNA"/>
</dbReference>
<dbReference type="RefSeq" id="WP_052846731.1">
    <property type="nucleotide sequence ID" value="NC_003106.2"/>
</dbReference>
<dbReference type="SMR" id="Q96YL7"/>
<dbReference type="STRING" id="273063.STK_21570"/>
<dbReference type="GeneID" id="1460228"/>
<dbReference type="KEGG" id="sto:STK_21570"/>
<dbReference type="PATRIC" id="fig|273063.9.peg.2446"/>
<dbReference type="eggNOG" id="arCOG01034">
    <property type="taxonomic scope" value="Archaea"/>
</dbReference>
<dbReference type="OrthoDB" id="52698at2157"/>
<dbReference type="Proteomes" id="UP000001015">
    <property type="component" value="Chromosome"/>
</dbReference>
<dbReference type="GO" id="GO:0005524">
    <property type="term" value="F:ATP binding"/>
    <property type="evidence" value="ECO:0007669"/>
    <property type="project" value="UniProtKB-UniRule"/>
</dbReference>
<dbReference type="GO" id="GO:0017111">
    <property type="term" value="F:ribonucleoside triphosphate phosphatase activity"/>
    <property type="evidence" value="ECO:0007669"/>
    <property type="project" value="UniProtKB-UniRule"/>
</dbReference>
<dbReference type="CDD" id="cd19482">
    <property type="entry name" value="RecA-like_Thep1"/>
    <property type="match status" value="1"/>
</dbReference>
<dbReference type="Gene3D" id="3.40.50.300">
    <property type="entry name" value="P-loop containing nucleotide triphosphate hydrolases"/>
    <property type="match status" value="1"/>
</dbReference>
<dbReference type="HAMAP" id="MF_00796">
    <property type="entry name" value="NTPase_1"/>
    <property type="match status" value="1"/>
</dbReference>
<dbReference type="InterPro" id="IPR004948">
    <property type="entry name" value="Nuc-triphosphatase_THEP1"/>
</dbReference>
<dbReference type="InterPro" id="IPR027417">
    <property type="entry name" value="P-loop_NTPase"/>
</dbReference>
<dbReference type="NCBIfam" id="NF010248">
    <property type="entry name" value="PRK13695.1"/>
    <property type="match status" value="1"/>
</dbReference>
<dbReference type="PANTHER" id="PTHR43146">
    <property type="entry name" value="CANCER-RELATED NUCLEOSIDE-TRIPHOSPHATASE"/>
    <property type="match status" value="1"/>
</dbReference>
<dbReference type="PANTHER" id="PTHR43146:SF1">
    <property type="entry name" value="CANCER-RELATED NUCLEOSIDE-TRIPHOSPHATASE"/>
    <property type="match status" value="1"/>
</dbReference>
<dbReference type="Pfam" id="PF03266">
    <property type="entry name" value="NTPase_1"/>
    <property type="match status" value="1"/>
</dbReference>
<dbReference type="SUPFAM" id="SSF52540">
    <property type="entry name" value="P-loop containing nucleoside triphosphate hydrolases"/>
    <property type="match status" value="1"/>
</dbReference>
<organism>
    <name type="scientific">Sulfurisphaera tokodaii (strain DSM 16993 / JCM 10545 / NBRC 100140 / 7)</name>
    <name type="common">Sulfolobus tokodaii</name>
    <dbReference type="NCBI Taxonomy" id="273063"/>
    <lineage>
        <taxon>Archaea</taxon>
        <taxon>Thermoproteota</taxon>
        <taxon>Thermoprotei</taxon>
        <taxon>Sulfolobales</taxon>
        <taxon>Sulfolobaceae</taxon>
        <taxon>Sulfurisphaera</taxon>
    </lineage>
</organism>
<gene>
    <name type="ordered locus">STK_21570</name>
</gene>
<name>NTPTH_SULTO</name>
<comment type="function">
    <text evidence="1">Has nucleotide phosphatase activity towards ATP, GTP, CTP, TTP and UTP. May hydrolyze nucleoside diphosphates with lower efficiency.</text>
</comment>
<comment type="catalytic activity">
    <reaction evidence="1">
        <text>a ribonucleoside 5'-triphosphate + H2O = a ribonucleoside 5'-diphosphate + phosphate + H(+)</text>
        <dbReference type="Rhea" id="RHEA:23680"/>
        <dbReference type="ChEBI" id="CHEBI:15377"/>
        <dbReference type="ChEBI" id="CHEBI:15378"/>
        <dbReference type="ChEBI" id="CHEBI:43474"/>
        <dbReference type="ChEBI" id="CHEBI:57930"/>
        <dbReference type="ChEBI" id="CHEBI:61557"/>
        <dbReference type="EC" id="3.6.1.15"/>
    </reaction>
</comment>
<comment type="similarity">
    <text evidence="1">Belongs to the THEP1 NTPase family.</text>
</comment>
<keyword id="KW-0067">ATP-binding</keyword>
<keyword id="KW-0378">Hydrolase</keyword>
<keyword id="KW-0547">Nucleotide-binding</keyword>
<keyword id="KW-1185">Reference proteome</keyword>
<sequence>MQTRLRVYITGEPGVGKTTIFLKVIDKLKSQGYSISGFYCPEVREKGQRIGFKIKSLDNEVEDWLASIYAKSSIKIGKYYITINEDIINKIKEKISKSEIIGIDEIGPMELSVPKLKEIIDYVLNEKPIVVAVVHRKISFKDGKTFVVTYENRNRLDNEIFNYIISSIQ</sequence>
<feature type="chain" id="PRO_0000146706" description="Nucleoside-triphosphatase THEP1">
    <location>
        <begin position="1"/>
        <end position="169"/>
    </location>
</feature>
<feature type="binding site" evidence="1">
    <location>
        <begin position="11"/>
        <end position="18"/>
    </location>
    <ligand>
        <name>ATP</name>
        <dbReference type="ChEBI" id="CHEBI:30616"/>
    </ligand>
</feature>
<feature type="binding site" evidence="1">
    <location>
        <begin position="100"/>
        <end position="107"/>
    </location>
    <ligand>
        <name>ATP</name>
        <dbReference type="ChEBI" id="CHEBI:30616"/>
    </ligand>
</feature>
<reference key="1">
    <citation type="journal article" date="2001" name="DNA Res.">
        <title>Complete genome sequence of an aerobic thermoacidophilic Crenarchaeon, Sulfolobus tokodaii strain7.</title>
        <authorList>
            <person name="Kawarabayasi Y."/>
            <person name="Hino Y."/>
            <person name="Horikawa H."/>
            <person name="Jin-no K."/>
            <person name="Takahashi M."/>
            <person name="Sekine M."/>
            <person name="Baba S."/>
            <person name="Ankai A."/>
            <person name="Kosugi H."/>
            <person name="Hosoyama A."/>
            <person name="Fukui S."/>
            <person name="Nagai Y."/>
            <person name="Nishijima K."/>
            <person name="Otsuka R."/>
            <person name="Nakazawa H."/>
            <person name="Takamiya M."/>
            <person name="Kato Y."/>
            <person name="Yoshizawa T."/>
            <person name="Tanaka T."/>
            <person name="Kudoh Y."/>
            <person name="Yamazaki J."/>
            <person name="Kushida N."/>
            <person name="Oguchi A."/>
            <person name="Aoki K."/>
            <person name="Masuda S."/>
            <person name="Yanagii M."/>
            <person name="Nishimura M."/>
            <person name="Yamagishi A."/>
            <person name="Oshima T."/>
            <person name="Kikuchi H."/>
        </authorList>
    </citation>
    <scope>NUCLEOTIDE SEQUENCE [LARGE SCALE GENOMIC DNA]</scope>
    <source>
        <strain>DSM 16993 / JCM 10545 / NBRC 100140 / 7</strain>
    </source>
</reference>
<proteinExistence type="inferred from homology"/>
<evidence type="ECO:0000255" key="1">
    <source>
        <dbReference type="HAMAP-Rule" id="MF_00796"/>
    </source>
</evidence>
<protein>
    <recommendedName>
        <fullName evidence="1">Nucleoside-triphosphatase THEP1</fullName>
        <shortName evidence="1">NTPase THEP1</shortName>
        <ecNumber evidence="1">3.6.1.15</ecNumber>
    </recommendedName>
    <alternativeName>
        <fullName evidence="1">Nucleoside triphosphate phosphohydrolase</fullName>
    </alternativeName>
</protein>
<accession>Q96YL7</accession>
<accession>F9VPA0</accession>